<organismHost>
    <name type="scientific">Sus scrofa</name>
    <name type="common">Pig</name>
    <dbReference type="NCBI Taxonomy" id="9823"/>
</organismHost>
<keyword id="KW-0175">Coiled coil</keyword>
<keyword id="KW-0325">Glycoprotein</keyword>
<keyword id="KW-1043">Host membrane</keyword>
<keyword id="KW-0945">Host-virus interaction</keyword>
<keyword id="KW-0472">Membrane</keyword>
<keyword id="KW-0732">Signal</keyword>
<keyword id="KW-0812">Transmembrane</keyword>
<keyword id="KW-1133">Transmembrane helix</keyword>
<keyword id="KW-1161">Viral attachment to host cell</keyword>
<keyword id="KW-0261">Viral envelope protein</keyword>
<keyword id="KW-0946">Virion</keyword>
<keyword id="KW-0843">Virulence</keyword>
<keyword id="KW-1160">Virus entry into host cell</keyword>
<protein>
    <recommendedName>
        <fullName evidence="1">Spike glycoprotein</fullName>
        <shortName evidence="1">S glycoprotein</shortName>
    </recommendedName>
    <alternativeName>
        <fullName evidence="1">E2</fullName>
    </alternativeName>
    <alternativeName>
        <fullName evidence="1">Peplomer protein</fullName>
    </alternativeName>
</protein>
<accession>Q01977</accession>
<evidence type="ECO:0000255" key="1">
    <source>
        <dbReference type="HAMAP-Rule" id="MF_04200"/>
    </source>
</evidence>
<evidence type="ECO:0000255" key="2">
    <source>
        <dbReference type="PROSITE-ProRule" id="PRU01271"/>
    </source>
</evidence>
<evidence type="ECO:0000255" key="3">
    <source>
        <dbReference type="PROSITE-ProRule" id="PRU01272"/>
    </source>
</evidence>
<evidence type="ECO:0000305" key="4"/>
<sequence>MKKLFVVLVVMPLIYGDNFPCSKLTNRTIGNQWNLIETFLLNYSSRLPPNSDVVLGDYFPTVQPWFNCIRNNSNDLYVTLENLKALYWDYATENITWNHRQRLNVVVNGYPYSITVTTTRNFNSAEGAIICICKGSPPTTTTESSLTCNWGSECRLNHKFPICPSNSEANCGNMLYGLQWFADEVVAYLHGASYRISFENQWSGTVTFGDMRATTLEVSGTLVDLWWFNPVYDVSYYRVNNKNGTTVVSNCTDQCASYVANVFTTQPGGFIPSDFSFNNWFLLTNSSTLVSGKLVTKQPLLVNCLWPVPSFEEAASTFCFEGAGFDQCNGAVLNNTVDVIRFNLNFTTNVQSGKGATVFSLNTTGGVTLEISCYTVSDSSFFSYGEIPFGVTDGPRYCYVHYNGTALKYLGTLPPSVKEIAISKWGHFYINGYNFFSTFPIDCISFNLTTGDSDVFWTIAYTSYTEALVQVENTAITKVTYCNSHVNNIKCSQITANLNNGFYPVSSSEVGLVNKSVVLLPSFYTHTIVNITIGLGMKRSGYGQPIASTLSNITLPMQDHNTDVYCIRSDQFSVYVHSTCKSALWDNIFKRNCTDVLDATAVIKTGTCPFSFDKLNNYLTFNKFCLSLSPVGANCKFDVAARTRTNEQVVRSLYVIYEEGDNIVGVPSDNSGVHDLSVLHLDSCTDYNIYGRTGVGIIRKTNRTLLSGLYYTSLSGDLLGFKNVSDGVIYSVTPCDVSAQAAVIDGTIVGAITSINSELLGLTHWTTTPNFYYYSIYNYTNDRTRGTAIDSNDVDCEPVITYSNIGVCKNGAFVFINVTHSDGDVQPISTGNVTIPTNFTISVQVEYIQVYTTPVSIDCSRYVCNGNPRCNKLLTQYVSACQTIEQALAMGARLENMEVDSMLFVSENALKLASVEAFNSSETLDPIYKEWPNIGGSWLEGLKYILPSHNSKRKYRSAIEDLLFDKVVTSGLGTVDEDYKRCTGGYDIADLVCAQYYNGIMVLPGVANADKMTMYTASLAGGITLGALGGGAVAIPFAVAVQARLNYVALQTDVLNKNQQILASAFNQAIGNITQSFGKVNDAIHXTSRGLATVAKALAKVQDVVXIQGQALSHLTVQLQNNFQAISSSISDIYNRLDELSADAQVDRLITGRLTALNAFVSQTLTRQAEVRASRQLAKDKVNECVRSQSQRFGFCGNGTHLFSLANAAPNGMIFFHTVLLPTAYETVTAWPGICASDGDRTFGLVVKDVQLTLFRNLDDKFYLTPRTMYQPRVATSSDFVQIEGCDVLFVNATVSDLPSIIPDYIDINQTVQDILENFRPNWTVPELTFDIFNATYLNLTGEIDDLEFRSEKLHNTTVELAILIDNINNTLVNLEWLNRIETYVKWPWYVWLLIGLVVIFCIPLLLFCCCSTGCCGCIGCLGSCCHSICSRRQFENYEPIEKVHVH</sequence>
<dbReference type="EMBL" id="M94099">
    <property type="protein sequence ID" value="AAA47108.1"/>
    <property type="molecule type" value="Genomic_RNA"/>
</dbReference>
<dbReference type="GO" id="GO:0044173">
    <property type="term" value="C:host cell endoplasmic reticulum-Golgi intermediate compartment membrane"/>
    <property type="evidence" value="ECO:0007669"/>
    <property type="project" value="UniProtKB-SubCell"/>
</dbReference>
<dbReference type="GO" id="GO:0016020">
    <property type="term" value="C:membrane"/>
    <property type="evidence" value="ECO:0007669"/>
    <property type="project" value="UniProtKB-UniRule"/>
</dbReference>
<dbReference type="GO" id="GO:0019031">
    <property type="term" value="C:viral envelope"/>
    <property type="evidence" value="ECO:0007669"/>
    <property type="project" value="UniProtKB-UniRule"/>
</dbReference>
<dbReference type="GO" id="GO:0055036">
    <property type="term" value="C:virion membrane"/>
    <property type="evidence" value="ECO:0007669"/>
    <property type="project" value="UniProtKB-SubCell"/>
</dbReference>
<dbReference type="GO" id="GO:0075509">
    <property type="term" value="P:endocytosis involved in viral entry into host cell"/>
    <property type="evidence" value="ECO:0007669"/>
    <property type="project" value="UniProtKB-UniRule"/>
</dbReference>
<dbReference type="GO" id="GO:0039654">
    <property type="term" value="P:fusion of virus membrane with host endosome membrane"/>
    <property type="evidence" value="ECO:0007669"/>
    <property type="project" value="UniProtKB-UniRule"/>
</dbReference>
<dbReference type="GO" id="GO:0019064">
    <property type="term" value="P:fusion of virus membrane with host plasma membrane"/>
    <property type="evidence" value="ECO:0007669"/>
    <property type="project" value="UniProtKB-UniRule"/>
</dbReference>
<dbReference type="GO" id="GO:0046813">
    <property type="term" value="P:receptor-mediated virion attachment to host cell"/>
    <property type="evidence" value="ECO:0007669"/>
    <property type="project" value="UniProtKB-UniRule"/>
</dbReference>
<dbReference type="CDD" id="cd22377">
    <property type="entry name" value="TGEV-like_Spike_SD1-2_S1-S2_S2"/>
    <property type="match status" value="1"/>
</dbReference>
<dbReference type="Gene3D" id="1.20.5.300">
    <property type="match status" value="2"/>
</dbReference>
<dbReference type="Gene3D" id="2.60.40.3130">
    <property type="match status" value="1"/>
</dbReference>
<dbReference type="HAMAP" id="MF_04200">
    <property type="entry name" value="ALPHA_CORONA_SPIKE"/>
    <property type="match status" value="1"/>
</dbReference>
<dbReference type="InterPro" id="IPR042552">
    <property type="entry name" value="ALPHA_CORONA_SPIKE"/>
</dbReference>
<dbReference type="InterPro" id="IPR043607">
    <property type="entry name" value="CoV_S1_C"/>
</dbReference>
<dbReference type="InterPro" id="IPR043473">
    <property type="entry name" value="S2_sf_CoV"/>
</dbReference>
<dbReference type="InterPro" id="IPR002551">
    <property type="entry name" value="Spike_S1_CoV"/>
</dbReference>
<dbReference type="InterPro" id="IPR002552">
    <property type="entry name" value="Spike_S2_CoV"/>
</dbReference>
<dbReference type="InterPro" id="IPR043614">
    <property type="entry name" value="Spike_S2_CoV_C"/>
</dbReference>
<dbReference type="InterPro" id="IPR044873">
    <property type="entry name" value="Spike_S2_CoV_HR1"/>
</dbReference>
<dbReference type="InterPro" id="IPR044874">
    <property type="entry name" value="Spike_S2_CoV_HR2"/>
</dbReference>
<dbReference type="Pfam" id="PF01600">
    <property type="entry name" value="CoV_S1"/>
    <property type="match status" value="1"/>
</dbReference>
<dbReference type="Pfam" id="PF19209">
    <property type="entry name" value="CoV_S1_C"/>
    <property type="match status" value="1"/>
</dbReference>
<dbReference type="Pfam" id="PF01601">
    <property type="entry name" value="CoV_S2"/>
    <property type="match status" value="1"/>
</dbReference>
<dbReference type="Pfam" id="PF19214">
    <property type="entry name" value="CoV_S2_C"/>
    <property type="match status" value="1"/>
</dbReference>
<dbReference type="SUPFAM" id="SSF111474">
    <property type="entry name" value="Coronavirus S2 glycoprotein"/>
    <property type="match status" value="2"/>
</dbReference>
<dbReference type="PROSITE" id="PS51923">
    <property type="entry name" value="COV_S2_HR1"/>
    <property type="match status" value="1"/>
</dbReference>
<dbReference type="PROSITE" id="PS51924">
    <property type="entry name" value="COV_S2_HR2"/>
    <property type="match status" value="1"/>
</dbReference>
<name>SPIKE_CVPRT</name>
<organism>
    <name type="scientific">Porcine transmissible gastroenteritis coronavirus (strain NEB72-rt)</name>
    <name type="common">TGEV</name>
    <dbReference type="NCBI Taxonomy" id="33738"/>
    <lineage>
        <taxon>Viruses</taxon>
        <taxon>Riboviria</taxon>
        <taxon>Orthornavirae</taxon>
        <taxon>Pisuviricota</taxon>
        <taxon>Pisoniviricetes</taxon>
        <taxon>Nidovirales</taxon>
        <taxon>Cornidovirineae</taxon>
        <taxon>Coronaviridae</taxon>
        <taxon>Orthocoronavirinae</taxon>
        <taxon>Alphacoronavirus</taxon>
        <taxon>Tegacovirus</taxon>
        <taxon>Alphacoronavirus 1</taxon>
    </lineage>
</organism>
<reference key="1">
    <citation type="journal article" date="1992" name="Virology">
        <title>Genetic evolution and tropism of transmissible gastroenteritis coronaviruses.</title>
        <authorList>
            <person name="Sanchez C.M."/>
            <person name="Gebauer F."/>
            <person name="Sune C."/>
            <person name="Mendez A."/>
            <person name="Dopazo J."/>
            <person name="Enjuanes L."/>
        </authorList>
    </citation>
    <scope>NUCLEOTIDE SEQUENCE [GENOMIC RNA]</scope>
</reference>
<comment type="function">
    <text evidence="1">S1 region attaches the virion to the cell membrane by interacting with host ANPEP/aminopeptidase N, initiating the infection. Binding to the receptor probably induces conformational changes in the S glycoprotein unmasking the fusion peptide of S2 region and activating membranes fusion. S2 region belongs to the class I viral fusion protein. Under the current model, the protein has at least 3 conformational states: pre-fusion native state, pre-hairpin intermediate state, and post-fusion hairpin state. During viral and target cell membrane fusion, the coiled coil regions (heptad repeats) regions assume a trimer-of-hairpins structure, positioning the fusion peptide in close proximity to the C-terminal region of the ectodomain. The formation of this structure appears to drive apposition and subsequent fusion of viral and target cell membranes.</text>
</comment>
<comment type="subunit">
    <text evidence="1">Homotrimer. During virus morphogenesis, found in a complex with M and HE proteins. Interacts with host ANPEP.</text>
</comment>
<comment type="subcellular location">
    <subcellularLocation>
        <location evidence="1">Virion membrane</location>
        <topology evidence="1">Single-pass type I membrane protein</topology>
    </subcellularLocation>
    <subcellularLocation>
        <location evidence="1">Host endoplasmic reticulum-Golgi intermediate compartment membrane</location>
        <topology evidence="1">Single-pass type I membrane protein</topology>
    </subcellularLocation>
    <text evidence="1">Accumulates in the endoplasmic reticulum-Golgi intermediate compartment, where it participates in virus particle assembly.</text>
</comment>
<comment type="domain">
    <text evidence="1">The KxHxx motif seems to function as an ER retrieval signal.</text>
</comment>
<comment type="similarity">
    <text evidence="1">Belongs to the alphacoronaviruses spike protein family.</text>
</comment>
<comment type="caution">
    <text evidence="1 4">In contrast to serogroups 2 and 3, S glycoprotein from serogroup 1 is not cleaved into S1 and S2.</text>
</comment>
<gene>
    <name evidence="1" type="primary">S</name>
    <name type="ORF">2</name>
</gene>
<feature type="signal peptide" evidence="1">
    <location>
        <begin position="1"/>
        <end position="28"/>
    </location>
</feature>
<feature type="chain" id="PRO_0000037228" description="Spike glycoprotein" evidence="1">
    <location>
        <begin position="29"/>
        <end position="1447"/>
    </location>
</feature>
<feature type="topological domain" description="Virion surface" evidence="1">
    <location>
        <begin position="29"/>
        <end position="1388"/>
    </location>
</feature>
<feature type="transmembrane region" description="Helical" evidence="1">
    <location>
        <begin position="1389"/>
        <end position="1408"/>
    </location>
</feature>
<feature type="topological domain" description="Intravirion" evidence="1">
    <location>
        <begin position="1409"/>
        <end position="1447"/>
    </location>
</feature>
<feature type="region of interest" description="S1">
    <location>
        <begin position="17"/>
        <end position="774"/>
    </location>
</feature>
<feature type="region of interest" description="S1" evidence="1">
    <location>
        <begin position="29"/>
        <end position="774"/>
    </location>
</feature>
<feature type="region of interest" description="Interaction with host ANPEP" evidence="1">
    <location>
        <begin position="655"/>
        <end position="799"/>
    </location>
</feature>
<feature type="region of interest" description="S2" evidence="1">
    <location>
        <begin position="775"/>
        <end position="1447"/>
    </location>
</feature>
<feature type="region of interest" description="Fusion peptide" evidence="1">
    <location>
        <begin position="1020"/>
        <end position="1041"/>
    </location>
</feature>
<feature type="region of interest" description="Heptad repeat 1 (HR1)" evidence="2">
    <location>
        <begin position="1035"/>
        <end position="1154"/>
    </location>
</feature>
<feature type="region of interest" description="Heptad repeat 2 (HR2)" evidence="3">
    <location>
        <begin position="1303"/>
        <end position="1400"/>
    </location>
</feature>
<feature type="coiled-coil region" evidence="1">
    <location>
        <begin position="1102"/>
        <end position="1146"/>
    </location>
</feature>
<feature type="coiled-coil region" evidence="1">
    <location>
        <begin position="1336"/>
        <end position="1378"/>
    </location>
</feature>
<feature type="short sequence motif" description="KxHxx" evidence="1">
    <location>
        <begin position="1443"/>
        <end position="1447"/>
    </location>
</feature>
<proteinExistence type="inferred from homology"/>